<reference key="1">
    <citation type="submission" date="2007-03" db="EMBL/GenBank/DDBJ databases">
        <title>Genome sequence of Rhodospirillum centenum.</title>
        <authorList>
            <person name="Touchman J.W."/>
            <person name="Bauer C."/>
            <person name="Blankenship R.E."/>
        </authorList>
    </citation>
    <scope>NUCLEOTIDE SEQUENCE [LARGE SCALE GENOMIC DNA]</scope>
    <source>
        <strain>ATCC 51521 / SW</strain>
    </source>
</reference>
<sequence>MRHGIAGRKFNRTTSHRLAMFSNMANALIKHEQIKTTLPKAKDLRPIVERLITLGKKGGLANKRLAYAELRDHDMVEKLFTTLAERYKGRPGGYTRVLKAGFRYGDAAPMGVIELVDRDPEAKGQDSGPVEIKDESEEG</sequence>
<feature type="chain" id="PRO_1000144473" description="Large ribosomal subunit protein bL17">
    <location>
        <begin position="1"/>
        <end position="139"/>
    </location>
</feature>
<feature type="region of interest" description="Disordered" evidence="2">
    <location>
        <begin position="117"/>
        <end position="139"/>
    </location>
</feature>
<protein>
    <recommendedName>
        <fullName evidence="1">Large ribosomal subunit protein bL17</fullName>
    </recommendedName>
    <alternativeName>
        <fullName evidence="3">50S ribosomal protein L17</fullName>
    </alternativeName>
</protein>
<organism>
    <name type="scientific">Rhodospirillum centenum (strain ATCC 51521 / SW)</name>
    <dbReference type="NCBI Taxonomy" id="414684"/>
    <lineage>
        <taxon>Bacteria</taxon>
        <taxon>Pseudomonadati</taxon>
        <taxon>Pseudomonadota</taxon>
        <taxon>Alphaproteobacteria</taxon>
        <taxon>Rhodospirillales</taxon>
        <taxon>Rhodospirillaceae</taxon>
        <taxon>Rhodospirillum</taxon>
    </lineage>
</organism>
<dbReference type="EMBL" id="CP000613">
    <property type="protein sequence ID" value="ACI98167.1"/>
    <property type="molecule type" value="Genomic_DNA"/>
</dbReference>
<dbReference type="RefSeq" id="WP_012565958.1">
    <property type="nucleotide sequence ID" value="NC_011420.2"/>
</dbReference>
<dbReference type="SMR" id="B6IRT1"/>
<dbReference type="STRING" id="414684.RC1_0736"/>
<dbReference type="KEGG" id="rce:RC1_0736"/>
<dbReference type="eggNOG" id="COG0203">
    <property type="taxonomic scope" value="Bacteria"/>
</dbReference>
<dbReference type="HOGENOM" id="CLU_074407_2_0_5"/>
<dbReference type="OrthoDB" id="9809073at2"/>
<dbReference type="Proteomes" id="UP000001591">
    <property type="component" value="Chromosome"/>
</dbReference>
<dbReference type="GO" id="GO:0022625">
    <property type="term" value="C:cytosolic large ribosomal subunit"/>
    <property type="evidence" value="ECO:0007669"/>
    <property type="project" value="TreeGrafter"/>
</dbReference>
<dbReference type="GO" id="GO:0003735">
    <property type="term" value="F:structural constituent of ribosome"/>
    <property type="evidence" value="ECO:0007669"/>
    <property type="project" value="InterPro"/>
</dbReference>
<dbReference type="GO" id="GO:0006412">
    <property type="term" value="P:translation"/>
    <property type="evidence" value="ECO:0007669"/>
    <property type="project" value="UniProtKB-UniRule"/>
</dbReference>
<dbReference type="FunFam" id="3.90.1030.10:FF:000001">
    <property type="entry name" value="50S ribosomal protein L17"/>
    <property type="match status" value="1"/>
</dbReference>
<dbReference type="Gene3D" id="3.90.1030.10">
    <property type="entry name" value="Ribosomal protein L17"/>
    <property type="match status" value="1"/>
</dbReference>
<dbReference type="HAMAP" id="MF_01368">
    <property type="entry name" value="Ribosomal_bL17"/>
    <property type="match status" value="1"/>
</dbReference>
<dbReference type="InterPro" id="IPR000456">
    <property type="entry name" value="Ribosomal_bL17"/>
</dbReference>
<dbReference type="InterPro" id="IPR047859">
    <property type="entry name" value="Ribosomal_bL17_CS"/>
</dbReference>
<dbReference type="InterPro" id="IPR036373">
    <property type="entry name" value="Ribosomal_bL17_sf"/>
</dbReference>
<dbReference type="NCBIfam" id="TIGR00059">
    <property type="entry name" value="L17"/>
    <property type="match status" value="1"/>
</dbReference>
<dbReference type="PANTHER" id="PTHR14413:SF16">
    <property type="entry name" value="LARGE RIBOSOMAL SUBUNIT PROTEIN BL17M"/>
    <property type="match status" value="1"/>
</dbReference>
<dbReference type="PANTHER" id="PTHR14413">
    <property type="entry name" value="RIBOSOMAL PROTEIN L17"/>
    <property type="match status" value="1"/>
</dbReference>
<dbReference type="Pfam" id="PF01196">
    <property type="entry name" value="Ribosomal_L17"/>
    <property type="match status" value="1"/>
</dbReference>
<dbReference type="SUPFAM" id="SSF64263">
    <property type="entry name" value="Prokaryotic ribosomal protein L17"/>
    <property type="match status" value="1"/>
</dbReference>
<dbReference type="PROSITE" id="PS01167">
    <property type="entry name" value="RIBOSOMAL_L17"/>
    <property type="match status" value="1"/>
</dbReference>
<evidence type="ECO:0000255" key="1">
    <source>
        <dbReference type="HAMAP-Rule" id="MF_01368"/>
    </source>
</evidence>
<evidence type="ECO:0000256" key="2">
    <source>
        <dbReference type="SAM" id="MobiDB-lite"/>
    </source>
</evidence>
<evidence type="ECO:0000305" key="3"/>
<comment type="subunit">
    <text evidence="1">Part of the 50S ribosomal subunit. Contacts protein L32.</text>
</comment>
<comment type="similarity">
    <text evidence="1">Belongs to the bacterial ribosomal protein bL17 family.</text>
</comment>
<accession>B6IRT1</accession>
<name>RL17_RHOCS</name>
<proteinExistence type="inferred from homology"/>
<gene>
    <name evidence="1" type="primary">rplQ</name>
    <name type="ordered locus">RC1_0736</name>
</gene>
<keyword id="KW-1185">Reference proteome</keyword>
<keyword id="KW-0687">Ribonucleoprotein</keyword>
<keyword id="KW-0689">Ribosomal protein</keyword>